<gene>
    <name type="primary">Kcnj8</name>
</gene>
<dbReference type="EMBL" id="D42145">
    <property type="protein sequence ID" value="BAA07716.1"/>
    <property type="molecule type" value="mRNA"/>
</dbReference>
<dbReference type="EMBL" id="AB043636">
    <property type="protein sequence ID" value="BAA96237.1"/>
    <property type="molecule type" value="mRNA"/>
</dbReference>
<dbReference type="EMBL" id="AB043637">
    <property type="protein sequence ID" value="BAA96238.1"/>
    <property type="molecule type" value="mRNA"/>
</dbReference>
<dbReference type="PIR" id="I60373">
    <property type="entry name" value="I60373"/>
</dbReference>
<dbReference type="RefSeq" id="NP_058795.3">
    <property type="nucleotide sequence ID" value="NM_017099.4"/>
</dbReference>
<dbReference type="PDB" id="7MIT">
    <property type="method" value="EM"/>
    <property type="resolution" value="3.40 A"/>
    <property type="chains" value="A/B/C/D=1-424"/>
</dbReference>
<dbReference type="PDB" id="7MJO">
    <property type="method" value="EM"/>
    <property type="resolution" value="4.00 A"/>
    <property type="chains" value="A/B/C/D=1-424"/>
</dbReference>
<dbReference type="PDB" id="7MJP">
    <property type="method" value="EM"/>
    <property type="resolution" value="4.20 A"/>
    <property type="chains" value="A/B/C/D=1-424"/>
</dbReference>
<dbReference type="PDB" id="7MJQ">
    <property type="method" value="EM"/>
    <property type="resolution" value="4.20 A"/>
    <property type="chains" value="A/B/C/D=1-424"/>
</dbReference>
<dbReference type="PDBsum" id="7MIT"/>
<dbReference type="PDBsum" id="7MJO"/>
<dbReference type="PDBsum" id="7MJP"/>
<dbReference type="PDBsum" id="7MJQ"/>
<dbReference type="EMDB" id="EMD-23864"/>
<dbReference type="EMDB" id="EMD-23880"/>
<dbReference type="EMDB" id="EMD-23881"/>
<dbReference type="EMDB" id="EMD-23882"/>
<dbReference type="SMR" id="Q63664"/>
<dbReference type="CORUM" id="Q63664"/>
<dbReference type="FunCoup" id="Q63664">
    <property type="interactions" value="18"/>
</dbReference>
<dbReference type="IntAct" id="Q63664">
    <property type="interactions" value="3"/>
</dbReference>
<dbReference type="MINT" id="Q63664"/>
<dbReference type="STRING" id="10116.ENSRNOP00000018057"/>
<dbReference type="ChEMBL" id="CHEMBL4524131"/>
<dbReference type="iPTMnet" id="Q63664"/>
<dbReference type="PhosphoSitePlus" id="Q63664"/>
<dbReference type="PaxDb" id="10116-ENSRNOP00000018057"/>
<dbReference type="ABCD" id="Q63664">
    <property type="antibodies" value="2 sequenced antibodies"/>
</dbReference>
<dbReference type="Ensembl" id="ENSRNOT00000018057.6">
    <property type="protein sequence ID" value="ENSRNOP00000018057.3"/>
    <property type="gene ID" value="ENSRNOG00000013463.6"/>
</dbReference>
<dbReference type="GeneID" id="25472"/>
<dbReference type="KEGG" id="rno:25472"/>
<dbReference type="UCSC" id="RGD:2960">
    <property type="organism name" value="rat"/>
</dbReference>
<dbReference type="AGR" id="RGD:2960"/>
<dbReference type="CTD" id="3764"/>
<dbReference type="RGD" id="2960">
    <property type="gene designation" value="Kcnj8"/>
</dbReference>
<dbReference type="eggNOG" id="KOG3827">
    <property type="taxonomic scope" value="Eukaryota"/>
</dbReference>
<dbReference type="GeneTree" id="ENSGT01130000278330"/>
<dbReference type="HOGENOM" id="CLU_022738_4_0_1"/>
<dbReference type="InParanoid" id="Q63664"/>
<dbReference type="OMA" id="RMITEHC"/>
<dbReference type="OrthoDB" id="273257at2759"/>
<dbReference type="PhylomeDB" id="Q63664"/>
<dbReference type="TreeFam" id="TF313676"/>
<dbReference type="Reactome" id="R-RNO-1296025">
    <property type="pathway name" value="ATP sensitive Potassium channels"/>
</dbReference>
<dbReference type="PRO" id="PR:Q63664"/>
<dbReference type="Proteomes" id="UP000002494">
    <property type="component" value="Chromosome 4"/>
</dbReference>
<dbReference type="Bgee" id="ENSRNOG00000013463">
    <property type="expression patterns" value="Expressed in heart and 19 other cell types or tissues"/>
</dbReference>
<dbReference type="GO" id="GO:0098978">
    <property type="term" value="C:glutamatergic synapse"/>
    <property type="evidence" value="ECO:0000314"/>
    <property type="project" value="SynGO"/>
</dbReference>
<dbReference type="GO" id="GO:0008282">
    <property type="term" value="C:inward rectifying potassium channel"/>
    <property type="evidence" value="ECO:0000314"/>
    <property type="project" value="RGD"/>
</dbReference>
<dbReference type="GO" id="GO:0030016">
    <property type="term" value="C:myofibril"/>
    <property type="evidence" value="ECO:0000266"/>
    <property type="project" value="RGD"/>
</dbReference>
<dbReference type="GO" id="GO:0005886">
    <property type="term" value="C:plasma membrane"/>
    <property type="evidence" value="ECO:0000318"/>
    <property type="project" value="GO_Central"/>
</dbReference>
<dbReference type="GO" id="GO:0098793">
    <property type="term" value="C:presynapse"/>
    <property type="evidence" value="ECO:0000266"/>
    <property type="project" value="RGD"/>
</dbReference>
<dbReference type="GO" id="GO:0048787">
    <property type="term" value="C:presynaptic active zone membrane"/>
    <property type="evidence" value="ECO:0000314"/>
    <property type="project" value="SynGO"/>
</dbReference>
<dbReference type="GO" id="GO:0032991">
    <property type="term" value="C:protein-containing complex"/>
    <property type="evidence" value="ECO:0000266"/>
    <property type="project" value="RGD"/>
</dbReference>
<dbReference type="GO" id="GO:0042383">
    <property type="term" value="C:sarcolemma"/>
    <property type="evidence" value="ECO:0000314"/>
    <property type="project" value="RGD"/>
</dbReference>
<dbReference type="GO" id="GO:0005524">
    <property type="term" value="F:ATP binding"/>
    <property type="evidence" value="ECO:0000314"/>
    <property type="project" value="ARUK-UCL"/>
</dbReference>
<dbReference type="GO" id="GO:0015272">
    <property type="term" value="F:ATP-activated inward rectifier potassium channel activity"/>
    <property type="evidence" value="ECO:0000314"/>
    <property type="project" value="RGD"/>
</dbReference>
<dbReference type="GO" id="GO:0019829">
    <property type="term" value="F:ATPase-coupled monoatomic cation transmembrane transporter activity"/>
    <property type="evidence" value="ECO:0000316"/>
    <property type="project" value="ARUK-UCL"/>
</dbReference>
<dbReference type="GO" id="GO:0017098">
    <property type="term" value="F:sulfonylurea receptor binding"/>
    <property type="evidence" value="ECO:0000353"/>
    <property type="project" value="RGD"/>
</dbReference>
<dbReference type="GO" id="GO:0099508">
    <property type="term" value="F:voltage-gated monoatomic ion channel activity involved in regulation of presynaptic membrane potential"/>
    <property type="evidence" value="ECO:0000266"/>
    <property type="project" value="RGD"/>
</dbReference>
<dbReference type="GO" id="GO:1902282">
    <property type="term" value="F:voltage-gated potassium channel activity involved in ventricular cardiac muscle cell action potential repolarization"/>
    <property type="evidence" value="ECO:0000266"/>
    <property type="project" value="RGD"/>
</dbReference>
<dbReference type="GO" id="GO:0001508">
    <property type="term" value="P:action potential"/>
    <property type="evidence" value="ECO:0000266"/>
    <property type="project" value="RGD"/>
</dbReference>
<dbReference type="GO" id="GO:0002250">
    <property type="term" value="P:adaptive immune response"/>
    <property type="evidence" value="ECO:0000266"/>
    <property type="project" value="RGD"/>
</dbReference>
<dbReference type="GO" id="GO:0006915">
    <property type="term" value="P:apoptotic process"/>
    <property type="evidence" value="ECO:0000266"/>
    <property type="project" value="RGD"/>
</dbReference>
<dbReference type="GO" id="GO:0060922">
    <property type="term" value="P:atrioventricular node cell differentiation"/>
    <property type="evidence" value="ECO:0000266"/>
    <property type="project" value="RGD"/>
</dbReference>
<dbReference type="GO" id="GO:0001568">
    <property type="term" value="P:blood vessel development"/>
    <property type="evidence" value="ECO:0000266"/>
    <property type="project" value="RGD"/>
</dbReference>
<dbReference type="GO" id="GO:0070588">
    <property type="term" value="P:calcium ion transmembrane transport"/>
    <property type="evidence" value="ECO:0000266"/>
    <property type="project" value="RGD"/>
</dbReference>
<dbReference type="GO" id="GO:0061762">
    <property type="term" value="P:CAMKK-AMPK signaling cascade"/>
    <property type="evidence" value="ECO:0000266"/>
    <property type="project" value="RGD"/>
</dbReference>
<dbReference type="GO" id="GO:0060920">
    <property type="term" value="P:cardiac pacemaker cell differentiation"/>
    <property type="evidence" value="ECO:0000266"/>
    <property type="project" value="RGD"/>
</dbReference>
<dbReference type="GO" id="GO:0008283">
    <property type="term" value="P:cell population proliferation"/>
    <property type="evidence" value="ECO:0000266"/>
    <property type="project" value="RGD"/>
</dbReference>
<dbReference type="GO" id="GO:0072359">
    <property type="term" value="P:circulatory system development"/>
    <property type="evidence" value="ECO:0000266"/>
    <property type="project" value="RGD"/>
</dbReference>
<dbReference type="GO" id="GO:0060976">
    <property type="term" value="P:coronary vasculature development"/>
    <property type="evidence" value="ECO:0000266"/>
    <property type="project" value="RGD"/>
</dbReference>
<dbReference type="GO" id="GO:0051607">
    <property type="term" value="P:defense response to virus"/>
    <property type="evidence" value="ECO:0000266"/>
    <property type="project" value="RGD"/>
</dbReference>
<dbReference type="GO" id="GO:0008340">
    <property type="term" value="P:determination of adult lifespan"/>
    <property type="evidence" value="ECO:0000266"/>
    <property type="project" value="RGD"/>
</dbReference>
<dbReference type="GO" id="GO:0030010">
    <property type="term" value="P:establishment of cell polarity"/>
    <property type="evidence" value="ECO:0000266"/>
    <property type="project" value="RGD"/>
</dbReference>
<dbReference type="GO" id="GO:0045444">
    <property type="term" value="P:fat cell differentiation"/>
    <property type="evidence" value="ECO:0000266"/>
    <property type="project" value="RGD"/>
</dbReference>
<dbReference type="GO" id="GO:0015908">
    <property type="term" value="P:fatty acid transport"/>
    <property type="evidence" value="ECO:0000266"/>
    <property type="project" value="RGD"/>
</dbReference>
<dbReference type="GO" id="GO:0048144">
    <property type="term" value="P:fibroblast proliferation"/>
    <property type="evidence" value="ECO:0000266"/>
    <property type="project" value="RGD"/>
</dbReference>
<dbReference type="GO" id="GO:0010467">
    <property type="term" value="P:gene expression"/>
    <property type="evidence" value="ECO:0000266"/>
    <property type="project" value="RGD"/>
</dbReference>
<dbReference type="GO" id="GO:0061535">
    <property type="term" value="P:glutamate secretion, neurotransmission"/>
    <property type="evidence" value="ECO:0000266"/>
    <property type="project" value="RGD"/>
</dbReference>
<dbReference type="GO" id="GO:0007507">
    <property type="term" value="P:heart development"/>
    <property type="evidence" value="ECO:0000266"/>
    <property type="project" value="RGD"/>
</dbReference>
<dbReference type="GO" id="GO:0003007">
    <property type="term" value="P:heart morphogenesis"/>
    <property type="evidence" value="ECO:0000266"/>
    <property type="project" value="RGD"/>
</dbReference>
<dbReference type="GO" id="GO:0006954">
    <property type="term" value="P:inflammatory response"/>
    <property type="evidence" value="ECO:0000266"/>
    <property type="project" value="RGD"/>
</dbReference>
<dbReference type="GO" id="GO:0098662">
    <property type="term" value="P:inorganic cation transmembrane transport"/>
    <property type="evidence" value="ECO:0000316"/>
    <property type="project" value="ARUK-UCL"/>
</dbReference>
<dbReference type="GO" id="GO:0001822">
    <property type="term" value="P:kidney development"/>
    <property type="evidence" value="ECO:0000270"/>
    <property type="project" value="RGD"/>
</dbReference>
<dbReference type="GO" id="GO:0098915">
    <property type="term" value="P:membrane repolarization during ventricular cardiac muscle cell action potential"/>
    <property type="evidence" value="ECO:0000266"/>
    <property type="project" value="RGD"/>
</dbReference>
<dbReference type="GO" id="GO:0001774">
    <property type="term" value="P:microglial cell activation"/>
    <property type="evidence" value="ECO:0000266"/>
    <property type="project" value="RGD"/>
</dbReference>
<dbReference type="GO" id="GO:0050877">
    <property type="term" value="P:nervous system process"/>
    <property type="evidence" value="ECO:0000266"/>
    <property type="project" value="RGD"/>
</dbReference>
<dbReference type="GO" id="GO:0050905">
    <property type="term" value="P:neuromuscular process"/>
    <property type="evidence" value="ECO:0000266"/>
    <property type="project" value="RGD"/>
</dbReference>
<dbReference type="GO" id="GO:0044546">
    <property type="term" value="P:NLRP3 inflammasome complex assembly"/>
    <property type="evidence" value="ECO:0000266"/>
    <property type="project" value="RGD"/>
</dbReference>
<dbReference type="GO" id="GO:0038066">
    <property type="term" value="P:p38MAPK cascade"/>
    <property type="evidence" value="ECO:0000266"/>
    <property type="project" value="RGD"/>
</dbReference>
<dbReference type="GO" id="GO:1990573">
    <property type="term" value="P:potassium ion import across plasma membrane"/>
    <property type="evidence" value="ECO:0000314"/>
    <property type="project" value="RGD"/>
</dbReference>
<dbReference type="GO" id="GO:0071805">
    <property type="term" value="P:potassium ion transmembrane transport"/>
    <property type="evidence" value="ECO:0000266"/>
    <property type="project" value="RGD"/>
</dbReference>
<dbReference type="GO" id="GO:0006813">
    <property type="term" value="P:potassium ion transport"/>
    <property type="evidence" value="ECO:0000314"/>
    <property type="project" value="RGD"/>
</dbReference>
<dbReference type="GO" id="GO:0009306">
    <property type="term" value="P:protein secretion"/>
    <property type="evidence" value="ECO:0000266"/>
    <property type="project" value="RGD"/>
</dbReference>
<dbReference type="GO" id="GO:0150103">
    <property type="term" value="P:reactive gliosis"/>
    <property type="evidence" value="ECO:0000266"/>
    <property type="project" value="RGD"/>
</dbReference>
<dbReference type="GO" id="GO:0008217">
    <property type="term" value="P:regulation of blood pressure"/>
    <property type="evidence" value="ECO:0000266"/>
    <property type="project" value="RGD"/>
</dbReference>
<dbReference type="GO" id="GO:0002027">
    <property type="term" value="P:regulation of heart rate"/>
    <property type="evidence" value="ECO:0000266"/>
    <property type="project" value="RGD"/>
</dbReference>
<dbReference type="GO" id="GO:0034765">
    <property type="term" value="P:regulation of monoatomic ion transmembrane transport"/>
    <property type="evidence" value="ECO:0000318"/>
    <property type="project" value="GO_Central"/>
</dbReference>
<dbReference type="GO" id="GO:0033198">
    <property type="term" value="P:response to ATP"/>
    <property type="evidence" value="ECO:0000266"/>
    <property type="project" value="RGD"/>
</dbReference>
<dbReference type="GO" id="GO:0034097">
    <property type="term" value="P:response to cytokine"/>
    <property type="evidence" value="ECO:0000266"/>
    <property type="project" value="RGD"/>
</dbReference>
<dbReference type="GO" id="GO:0034976">
    <property type="term" value="P:response to endoplasmic reticulum stress"/>
    <property type="evidence" value="ECO:0000266"/>
    <property type="project" value="RGD"/>
</dbReference>
<dbReference type="GO" id="GO:0043330">
    <property type="term" value="P:response to exogenous dsRNA"/>
    <property type="evidence" value="ECO:0000266"/>
    <property type="project" value="RGD"/>
</dbReference>
<dbReference type="GO" id="GO:0001666">
    <property type="term" value="P:response to hypoxia"/>
    <property type="evidence" value="ECO:0000266"/>
    <property type="project" value="RGD"/>
</dbReference>
<dbReference type="GO" id="GO:0032868">
    <property type="term" value="P:response to insulin"/>
    <property type="evidence" value="ECO:0000266"/>
    <property type="project" value="RGD"/>
</dbReference>
<dbReference type="GO" id="GO:0002931">
    <property type="term" value="P:response to ischemia"/>
    <property type="evidence" value="ECO:0000266"/>
    <property type="project" value="RGD"/>
</dbReference>
<dbReference type="GO" id="GO:0032496">
    <property type="term" value="P:response to lipopolysaccharide"/>
    <property type="evidence" value="ECO:0000266"/>
    <property type="project" value="RGD"/>
</dbReference>
<dbReference type="GO" id="GO:1904638">
    <property type="term" value="P:response to resveratrol"/>
    <property type="evidence" value="ECO:0000266"/>
    <property type="project" value="RGD"/>
</dbReference>
<dbReference type="GO" id="GO:0006950">
    <property type="term" value="P:response to stress"/>
    <property type="evidence" value="ECO:0000266"/>
    <property type="project" value="RGD"/>
</dbReference>
<dbReference type="GO" id="GO:0009410">
    <property type="term" value="P:response to xenobiotic stimulus"/>
    <property type="evidence" value="ECO:0000266"/>
    <property type="project" value="RGD"/>
</dbReference>
<dbReference type="GO" id="GO:0051124">
    <property type="term" value="P:synaptic assembly at neuromuscular junction"/>
    <property type="evidence" value="ECO:0000266"/>
    <property type="project" value="RGD"/>
</dbReference>
<dbReference type="GO" id="GO:0019226">
    <property type="term" value="P:transmission of nerve impulse"/>
    <property type="evidence" value="ECO:0000266"/>
    <property type="project" value="RGD"/>
</dbReference>
<dbReference type="GO" id="GO:0001944">
    <property type="term" value="P:vasculature development"/>
    <property type="evidence" value="ECO:0000266"/>
    <property type="project" value="RGD"/>
</dbReference>
<dbReference type="GO" id="GO:0042311">
    <property type="term" value="P:vasodilation"/>
    <property type="evidence" value="ECO:0000266"/>
    <property type="project" value="RGD"/>
</dbReference>
<dbReference type="GO" id="GO:0003229">
    <property type="term" value="P:ventricular cardiac muscle tissue development"/>
    <property type="evidence" value="ECO:0000266"/>
    <property type="project" value="RGD"/>
</dbReference>
<dbReference type="FunFam" id="1.10.287.70:FF:000050">
    <property type="entry name" value="ATP-sensitive inward rectifier potassium channel 11"/>
    <property type="match status" value="1"/>
</dbReference>
<dbReference type="FunFam" id="2.60.40.1400:FF:000001">
    <property type="entry name" value="G protein-activated inward rectifier potassium channel 2"/>
    <property type="match status" value="1"/>
</dbReference>
<dbReference type="Gene3D" id="1.10.287.70">
    <property type="match status" value="1"/>
</dbReference>
<dbReference type="Gene3D" id="2.60.40.1400">
    <property type="entry name" value="G protein-activated inward rectifier potassium channel 1"/>
    <property type="match status" value="1"/>
</dbReference>
<dbReference type="InterPro" id="IPR014756">
    <property type="entry name" value="Ig_E-set"/>
</dbReference>
<dbReference type="InterPro" id="IPR041647">
    <property type="entry name" value="IRK_C"/>
</dbReference>
<dbReference type="InterPro" id="IPR016449">
    <property type="entry name" value="K_chnl_inward-rec_Kir"/>
</dbReference>
<dbReference type="InterPro" id="IPR003278">
    <property type="entry name" value="K_chnl_inward-rec_Kir6.1"/>
</dbReference>
<dbReference type="InterPro" id="IPR013518">
    <property type="entry name" value="K_chnl_inward-rec_Kir_cyto"/>
</dbReference>
<dbReference type="InterPro" id="IPR040445">
    <property type="entry name" value="Kir_TM"/>
</dbReference>
<dbReference type="PANTHER" id="PTHR11767:SF11">
    <property type="entry name" value="ATP-SENSITIVE INWARD RECTIFIER POTASSIUM CHANNEL 8"/>
    <property type="match status" value="1"/>
</dbReference>
<dbReference type="PANTHER" id="PTHR11767">
    <property type="entry name" value="INWARD RECTIFIER POTASSIUM CHANNEL"/>
    <property type="match status" value="1"/>
</dbReference>
<dbReference type="Pfam" id="PF01007">
    <property type="entry name" value="IRK"/>
    <property type="match status" value="1"/>
</dbReference>
<dbReference type="Pfam" id="PF17655">
    <property type="entry name" value="IRK_C"/>
    <property type="match status" value="1"/>
</dbReference>
<dbReference type="PIRSF" id="PIRSF005465">
    <property type="entry name" value="GIRK_kir"/>
    <property type="match status" value="1"/>
</dbReference>
<dbReference type="PRINTS" id="PR01331">
    <property type="entry name" value="KIR61CHANNEL"/>
</dbReference>
<dbReference type="PRINTS" id="PR01320">
    <property type="entry name" value="KIRCHANNEL"/>
</dbReference>
<dbReference type="SUPFAM" id="SSF81296">
    <property type="entry name" value="E set domains"/>
    <property type="match status" value="1"/>
</dbReference>
<dbReference type="SUPFAM" id="SSF81324">
    <property type="entry name" value="Voltage-gated potassium channels"/>
    <property type="match status" value="1"/>
</dbReference>
<reference key="1">
    <citation type="journal article" date="1995" name="J. Biol. Chem.">
        <title>Cloning and functional characterization of a novel ATP-sensitive potassium channel ubiquitously expressed in rat tissues, including pancreatic islets, pituitary, skeletal muscle, and heart.</title>
        <authorList>
            <person name="Inagaki N."/>
            <person name="Tsuura Y."/>
            <person name="Namba N."/>
            <person name="Masuda K."/>
            <person name="Gonoi T."/>
            <person name="Horie M."/>
            <person name="Seino Y."/>
            <person name="Mizuta M."/>
            <person name="Seino S."/>
        </authorList>
    </citation>
    <scope>NUCLEOTIDE SEQUENCE [MRNA]</scope>
    <scope>FUNCTION</scope>
    <scope>TISSUE SPECIFICITY</scope>
    <scope>TRANSPORTER ACTIVITY</scope>
    <source>
        <strain>Sprague-Dawley</strain>
        <tissue>Pancreatic islet</tissue>
    </source>
</reference>
<reference key="2">
    <citation type="submission" date="2000-05" db="EMBL/GenBank/DDBJ databases">
        <authorList>
            <person name="Cao K."/>
            <person name="Wang R."/>
        </authorList>
    </citation>
    <scope>NUCLEOTIDE SEQUENCE [MRNA]</scope>
    <scope>VARIANTS</scope>
    <source>
        <strain>Sprague-Dawley</strain>
        <tissue>Vascular smooth muscle</tissue>
    </source>
</reference>
<organism>
    <name type="scientific">Rattus norvegicus</name>
    <name type="common">Rat</name>
    <dbReference type="NCBI Taxonomy" id="10116"/>
    <lineage>
        <taxon>Eukaryota</taxon>
        <taxon>Metazoa</taxon>
        <taxon>Chordata</taxon>
        <taxon>Craniata</taxon>
        <taxon>Vertebrata</taxon>
        <taxon>Euteleostomi</taxon>
        <taxon>Mammalia</taxon>
        <taxon>Eutheria</taxon>
        <taxon>Euarchontoglires</taxon>
        <taxon>Glires</taxon>
        <taxon>Rodentia</taxon>
        <taxon>Myomorpha</taxon>
        <taxon>Muroidea</taxon>
        <taxon>Muridae</taxon>
        <taxon>Murinae</taxon>
        <taxon>Rattus</taxon>
    </lineage>
</organism>
<proteinExistence type="evidence at protein level"/>
<name>KCNJ8_RAT</name>
<protein>
    <recommendedName>
        <fullName>ATP-sensitive inward rectifier potassium channel 8</fullName>
    </recommendedName>
    <alternativeName>
        <fullName>Inward rectifier K(+) channel Kir6.1</fullName>
    </alternativeName>
    <alternativeName>
        <fullName>Potassium channel, inwardly rectifying subfamily J member 8</fullName>
    </alternativeName>
    <alternativeName>
        <fullName>uKATP-1</fullName>
    </alternativeName>
</protein>
<accession>Q63664</accession>
<accession>Q9JM49</accession>
<accession>Q9JM50</accession>
<feature type="chain" id="PRO_0000154949" description="ATP-sensitive inward rectifier potassium channel 8">
    <location>
        <begin position="1"/>
        <end position="424"/>
    </location>
</feature>
<feature type="topological domain" description="Cytoplasmic" evidence="1">
    <location>
        <begin position="1"/>
        <end position="69"/>
    </location>
</feature>
<feature type="transmembrane region" description="Helical; Name=M1" evidence="1">
    <location>
        <begin position="70"/>
        <end position="94"/>
    </location>
</feature>
<feature type="topological domain" description="Extracellular" evidence="1">
    <location>
        <begin position="95"/>
        <end position="126"/>
    </location>
</feature>
<feature type="intramembrane region" description="Helical; Pore-forming; Name=H5" evidence="1">
    <location>
        <begin position="127"/>
        <end position="138"/>
    </location>
</feature>
<feature type="intramembrane region" description="Pore-forming" evidence="1">
    <location>
        <begin position="139"/>
        <end position="145"/>
    </location>
</feature>
<feature type="topological domain" description="Extracellular" evidence="1">
    <location>
        <begin position="146"/>
        <end position="154"/>
    </location>
</feature>
<feature type="transmembrane region" description="Helical; Name=M2" evidence="1">
    <location>
        <begin position="155"/>
        <end position="176"/>
    </location>
</feature>
<feature type="topological domain" description="Cytoplasmic" evidence="1">
    <location>
        <begin position="177"/>
        <end position="424"/>
    </location>
</feature>
<feature type="region of interest" description="Disordered" evidence="4">
    <location>
        <begin position="374"/>
        <end position="424"/>
    </location>
</feature>
<feature type="short sequence motif" description="Selectivity filter" evidence="1">
    <location>
        <begin position="140"/>
        <end position="145"/>
    </location>
</feature>
<feature type="compositionally biased region" description="Low complexity" evidence="4">
    <location>
        <begin position="387"/>
        <end position="404"/>
    </location>
</feature>
<feature type="site" description="Role in the control of polyamine-mediated channel gating and in the blocking by intracellular magnesium" evidence="1">
    <location>
        <position position="170"/>
    </location>
</feature>
<feature type="modified residue" description="Phosphoserine" evidence="2">
    <location>
        <position position="6"/>
    </location>
</feature>
<feature type="sequence variant">
    <original>R</original>
    <variation>H</variation>
    <location>
        <position position="23"/>
    </location>
</feature>
<feature type="sequence variant">
    <original>K</original>
    <variation>Q</variation>
    <location>
        <position position="48"/>
    </location>
</feature>
<feature type="sequence variant">
    <original>E</original>
    <variation>G</variation>
    <location>
        <position position="150"/>
    </location>
</feature>
<feature type="sequence variant">
    <original>N</original>
    <variation>D</variation>
    <location>
        <position position="170"/>
    </location>
</feature>
<feature type="sequence variant">
    <original>V</original>
    <variation>A</variation>
    <location>
        <position position="241"/>
    </location>
</feature>
<feature type="sequence variant">
    <original>S</original>
    <variation>F</variation>
    <location>
        <position position="379"/>
    </location>
</feature>
<feature type="helix" evidence="7">
    <location>
        <begin position="17"/>
        <end position="20"/>
    </location>
</feature>
<feature type="helix" evidence="7">
    <location>
        <begin position="58"/>
        <end position="65"/>
    </location>
</feature>
<feature type="helix" evidence="7">
    <location>
        <begin position="69"/>
        <end position="97"/>
    </location>
</feature>
<feature type="helix" evidence="7">
    <location>
        <begin position="100"/>
        <end position="109"/>
    </location>
</feature>
<feature type="turn" evidence="7">
    <location>
        <begin position="110"/>
        <end position="112"/>
    </location>
</feature>
<feature type="helix" evidence="7">
    <location>
        <begin position="127"/>
        <end position="138"/>
    </location>
</feature>
<feature type="strand" evidence="7">
    <location>
        <begin position="144"/>
        <end position="146"/>
    </location>
</feature>
<feature type="helix" evidence="7">
    <location>
        <begin position="153"/>
        <end position="182"/>
    </location>
</feature>
<feature type="strand" evidence="7">
    <location>
        <begin position="183"/>
        <end position="185"/>
    </location>
</feature>
<feature type="strand" evidence="7">
    <location>
        <begin position="191"/>
        <end position="193"/>
    </location>
</feature>
<feature type="strand" evidence="7">
    <location>
        <begin position="209"/>
        <end position="214"/>
    </location>
</feature>
<feature type="strand" evidence="7">
    <location>
        <begin position="216"/>
        <end position="218"/>
    </location>
</feature>
<feature type="strand" evidence="7">
    <location>
        <begin position="220"/>
        <end position="234"/>
    </location>
</feature>
<feature type="strand" evidence="7">
    <location>
        <begin position="240"/>
        <end position="247"/>
    </location>
</feature>
<feature type="strand" evidence="7">
    <location>
        <begin position="265"/>
        <end position="268"/>
    </location>
</feature>
<feature type="helix" evidence="7">
    <location>
        <begin position="276"/>
        <end position="279"/>
    </location>
</feature>
<feature type="turn" evidence="7">
    <location>
        <begin position="282"/>
        <end position="286"/>
    </location>
</feature>
<feature type="strand" evidence="7">
    <location>
        <begin position="291"/>
        <end position="300"/>
    </location>
</feature>
<feature type="turn" evidence="7">
    <location>
        <begin position="301"/>
        <end position="303"/>
    </location>
</feature>
<feature type="strand" evidence="7">
    <location>
        <begin position="306"/>
        <end position="314"/>
    </location>
</feature>
<feature type="turn" evidence="7">
    <location>
        <begin position="315"/>
        <end position="317"/>
    </location>
</feature>
<feature type="strand" evidence="7">
    <location>
        <begin position="322"/>
        <end position="324"/>
    </location>
</feature>
<feature type="strand" evidence="7">
    <location>
        <begin position="328"/>
        <end position="330"/>
    </location>
</feature>
<feature type="strand" evidence="7">
    <location>
        <begin position="332"/>
        <end position="338"/>
    </location>
</feature>
<feature type="helix" evidence="7">
    <location>
        <begin position="339"/>
        <end position="341"/>
    </location>
</feature>
<feature type="strand" evidence="7">
    <location>
        <begin position="345"/>
        <end position="347"/>
    </location>
</feature>
<feature type="helix" evidence="7">
    <location>
        <begin position="355"/>
        <end position="358"/>
    </location>
</feature>
<keyword id="KW-0002">3D-structure</keyword>
<keyword id="KW-0407">Ion channel</keyword>
<keyword id="KW-0406">Ion transport</keyword>
<keyword id="KW-0472">Membrane</keyword>
<keyword id="KW-0597">Phosphoprotein</keyword>
<keyword id="KW-0630">Potassium</keyword>
<keyword id="KW-0633">Potassium transport</keyword>
<keyword id="KW-1185">Reference proteome</keyword>
<keyword id="KW-0812">Transmembrane</keyword>
<keyword id="KW-1133">Transmembrane helix</keyword>
<keyword id="KW-0813">Transport</keyword>
<keyword id="KW-0851">Voltage-gated channel</keyword>
<evidence type="ECO:0000250" key="1"/>
<evidence type="ECO:0000250" key="2">
    <source>
        <dbReference type="UniProtKB" id="P97794"/>
    </source>
</evidence>
<evidence type="ECO:0000255" key="3"/>
<evidence type="ECO:0000256" key="4">
    <source>
        <dbReference type="SAM" id="MobiDB-lite"/>
    </source>
</evidence>
<evidence type="ECO:0000269" key="5">
    <source>
    </source>
</evidence>
<evidence type="ECO:0000305" key="6"/>
<evidence type="ECO:0007829" key="7">
    <source>
        <dbReference type="PDB" id="7MIT"/>
    </source>
</evidence>
<comment type="function">
    <text evidence="2 5">Inward rectifier potassium channels are characterized by a greater tendency to allow potassium to flow into the cell rather than out of it. Their voltage dependence is regulated by the concentration of extracellular potassium; as external potassium is raised, the voltage range of the channel opening shifts to more positive voltages. The inward rectification is mainly due to the blockage of outward current by internal magnesium. This channel is activated by internal ATP and can be blocked by external barium (PubMed:7890693). Can form a sulfonyllurea-sensitive but ATP-insensitive potassium channel with ABCC9 (By similarity).</text>
</comment>
<comment type="catalytic activity">
    <reaction evidence="5">
        <text>K(+)(in) = K(+)(out)</text>
        <dbReference type="Rhea" id="RHEA:29463"/>
        <dbReference type="ChEBI" id="CHEBI:29103"/>
    </reaction>
</comment>
<comment type="subunit">
    <text evidence="2">Interacts with ABCC9.</text>
</comment>
<comment type="interaction">
    <interactant intactId="EBI-6991142">
        <id>Q63664</id>
    </interactant>
    <interactant intactId="EBI-476947">
        <id>P08050</id>
        <label>Gja1</label>
    </interactant>
    <organismsDiffer>false</organismsDiffer>
    <experiments>4</experiments>
</comment>
<comment type="interaction">
    <interactant intactId="EBI-6991142">
        <id>Q63664</id>
    </interactant>
    <interactant intactId="EBI-298630">
        <id>P23242</id>
        <label>Gja1</label>
    </interactant>
    <organismsDiffer>true</organismsDiffer>
    <experiments>4</experiments>
</comment>
<comment type="subcellular location">
    <subcellularLocation>
        <location evidence="3">Membrane</location>
        <topology evidence="3">Multi-pass membrane protein</topology>
    </subcellularLocation>
</comment>
<comment type="tissue specificity">
    <text evidence="5">Widely expressed, including in pancreatic islets, pituitary, skeletal muscle and heart.</text>
</comment>
<comment type="similarity">
    <text evidence="6">Belongs to the inward rectifier-type potassium channel (TC 1.A.2.1) family. KCNJ8 subfamily.</text>
</comment>
<sequence length="424" mass="47963">MLARKSIIPEEYVLARIAAENLRKPRIRDRLPKARFIAKSGACNLAHKNIREQGRFLQDIFTTLVDLKWRHTLVIFTMSFLCSWLLFAIMWWLVAFAHGDIYAYMEKGITEKSGLESAVCVTNVRSFTSAFLFSIEVQVTIGFGGRMMTEECPLAITVLILQNIVGLIINAVMLGCIFMKTAQAHRRAETLIFSRHAVIAVRNGKLCFMFRVGDLRKSMIISASVRIQVVKKTTTPEGEVVPIHQQDIPVDNPIESNNIFLVAPLIICHVIDKRSPLYDISATDLVNQDLEVIVILEGVVETTGITTQARTSYIAEEIQWGHRFVSIVTEEEGVYSVDYSKFGNTVRVAAPRCSARELDEKPSILIQTLQKSELSHQNSLRKRNSMRRNNSMRRSNSIRRNNSSLMVPKVQFMTPEGNQCPSES</sequence>